<organism>
    <name type="scientific">Natranaerobius thermophilus (strain ATCC BAA-1301 / DSM 18059 / JW/NM-WN-LF)</name>
    <dbReference type="NCBI Taxonomy" id="457570"/>
    <lineage>
        <taxon>Bacteria</taxon>
        <taxon>Bacillati</taxon>
        <taxon>Bacillota</taxon>
        <taxon>Clostridia</taxon>
        <taxon>Natranaerobiales</taxon>
        <taxon>Natranaerobiaceae</taxon>
        <taxon>Natranaerobius</taxon>
    </lineage>
</organism>
<keyword id="KW-0067">ATP-binding</keyword>
<keyword id="KW-0315">Glutamine amidotransferase</keyword>
<keyword id="KW-0332">GMP biosynthesis</keyword>
<keyword id="KW-0436">Ligase</keyword>
<keyword id="KW-0547">Nucleotide-binding</keyword>
<keyword id="KW-0658">Purine biosynthesis</keyword>
<keyword id="KW-1185">Reference proteome</keyword>
<evidence type="ECO:0000255" key="1">
    <source>
        <dbReference type="HAMAP-Rule" id="MF_00344"/>
    </source>
</evidence>
<comment type="function">
    <text evidence="1">Catalyzes the synthesis of GMP from XMP.</text>
</comment>
<comment type="catalytic activity">
    <reaction evidence="1">
        <text>XMP + L-glutamine + ATP + H2O = GMP + L-glutamate + AMP + diphosphate + 2 H(+)</text>
        <dbReference type="Rhea" id="RHEA:11680"/>
        <dbReference type="ChEBI" id="CHEBI:15377"/>
        <dbReference type="ChEBI" id="CHEBI:15378"/>
        <dbReference type="ChEBI" id="CHEBI:29985"/>
        <dbReference type="ChEBI" id="CHEBI:30616"/>
        <dbReference type="ChEBI" id="CHEBI:33019"/>
        <dbReference type="ChEBI" id="CHEBI:57464"/>
        <dbReference type="ChEBI" id="CHEBI:58115"/>
        <dbReference type="ChEBI" id="CHEBI:58359"/>
        <dbReference type="ChEBI" id="CHEBI:456215"/>
        <dbReference type="EC" id="6.3.5.2"/>
    </reaction>
</comment>
<comment type="pathway">
    <text evidence="1">Purine metabolism; GMP biosynthesis; GMP from XMP (L-Gln route): step 1/1.</text>
</comment>
<comment type="subunit">
    <text evidence="1">Homodimer.</text>
</comment>
<feature type="chain" id="PRO_1000120340" description="GMP synthase [glutamine-hydrolyzing]">
    <location>
        <begin position="1"/>
        <end position="510"/>
    </location>
</feature>
<feature type="domain" description="Glutamine amidotransferase type-1" evidence="1">
    <location>
        <begin position="5"/>
        <end position="195"/>
    </location>
</feature>
<feature type="domain" description="GMPS ATP-PPase" evidence="1">
    <location>
        <begin position="196"/>
        <end position="385"/>
    </location>
</feature>
<feature type="active site" description="Nucleophile" evidence="1">
    <location>
        <position position="82"/>
    </location>
</feature>
<feature type="active site" evidence="1">
    <location>
        <position position="169"/>
    </location>
</feature>
<feature type="active site" evidence="1">
    <location>
        <position position="171"/>
    </location>
</feature>
<feature type="binding site" evidence="1">
    <location>
        <begin position="223"/>
        <end position="229"/>
    </location>
    <ligand>
        <name>ATP</name>
        <dbReference type="ChEBI" id="CHEBI:30616"/>
    </ligand>
</feature>
<protein>
    <recommendedName>
        <fullName evidence="1">GMP synthase [glutamine-hydrolyzing]</fullName>
        <ecNumber evidence="1">6.3.5.2</ecNumber>
    </recommendedName>
    <alternativeName>
        <fullName evidence="1">GMP synthetase</fullName>
    </alternativeName>
    <alternativeName>
        <fullName evidence="1">Glutamine amidotransferase</fullName>
    </alternativeName>
</protein>
<proteinExistence type="inferred from homology"/>
<accession>B2A5V5</accession>
<reference key="1">
    <citation type="submission" date="2008-04" db="EMBL/GenBank/DDBJ databases">
        <title>Complete sequence of chromosome of Natranaerobius thermophilus JW/NM-WN-LF.</title>
        <authorList>
            <consortium name="US DOE Joint Genome Institute"/>
            <person name="Copeland A."/>
            <person name="Lucas S."/>
            <person name="Lapidus A."/>
            <person name="Glavina del Rio T."/>
            <person name="Dalin E."/>
            <person name="Tice H."/>
            <person name="Bruce D."/>
            <person name="Goodwin L."/>
            <person name="Pitluck S."/>
            <person name="Chertkov O."/>
            <person name="Brettin T."/>
            <person name="Detter J.C."/>
            <person name="Han C."/>
            <person name="Kuske C.R."/>
            <person name="Schmutz J."/>
            <person name="Larimer F."/>
            <person name="Land M."/>
            <person name="Hauser L."/>
            <person name="Kyrpides N."/>
            <person name="Lykidis A."/>
            <person name="Mesbah N.M."/>
            <person name="Wiegel J."/>
        </authorList>
    </citation>
    <scope>NUCLEOTIDE SEQUENCE [LARGE SCALE GENOMIC DNA]</scope>
    <source>
        <strain>ATCC BAA-1301 / DSM 18059 / JW/NM-WN-LF</strain>
    </source>
</reference>
<gene>
    <name evidence="1" type="primary">guaA</name>
    <name type="ordered locus">Nther_0452</name>
</gene>
<name>GUAA_NATTJ</name>
<sequence>MSRELVIVLDFGGQYSRLIARRIREHNVYCEIYPYNISINKLKQLSPAAIVLSGGPSSVYQEGSPDLDTEIFEIGIPVLGICYGMQLMAKKLGGTVTGSTKREYGKALLEIENPNLLTEGVSSDLLVWMSHGDSVEQVPPGFKVMGKTENTPIAGLFNPDKNLYGVQFHLEVMHTPKGREMLKNFLFNIADLSADWTMGSYIEETVEQIKTEAQGRKAVCGLSGGIDSTVAALLVQKAIGDDLTCIFVNHGLLRKNEQDQVRELFEQEFDINLVYVDASDRFLNKLQGVTDPEQKRKIIGEEFIRVFEEEARKIGDVDFLVQGTLYTDVVESGTETASVIKSHHNVGGLPEKMDLSLIEPLNSLFKDEVRQVARELGLHREIVERHPFPGPGLAIRVLGEITKEKLDILREADAVVSDELKKIGLYHDIWQLFTVLPDIKTVGVKGDERSYDYPIILRAVNSEDGMTADWYRFSNDVLERLSNRVVNEVDGVNRFIYDITSKPPATIEWE</sequence>
<dbReference type="EC" id="6.3.5.2" evidence="1"/>
<dbReference type="EMBL" id="CP001034">
    <property type="protein sequence ID" value="ACB84048.1"/>
    <property type="molecule type" value="Genomic_DNA"/>
</dbReference>
<dbReference type="RefSeq" id="WP_012446935.1">
    <property type="nucleotide sequence ID" value="NC_010718.1"/>
</dbReference>
<dbReference type="SMR" id="B2A5V5"/>
<dbReference type="FunCoup" id="B2A5V5">
    <property type="interactions" value="465"/>
</dbReference>
<dbReference type="STRING" id="457570.Nther_0452"/>
<dbReference type="MEROPS" id="C26.957"/>
<dbReference type="KEGG" id="nth:Nther_0452"/>
<dbReference type="eggNOG" id="COG0518">
    <property type="taxonomic scope" value="Bacteria"/>
</dbReference>
<dbReference type="eggNOG" id="COG0519">
    <property type="taxonomic scope" value="Bacteria"/>
</dbReference>
<dbReference type="HOGENOM" id="CLU_014340_0_5_9"/>
<dbReference type="InParanoid" id="B2A5V5"/>
<dbReference type="OrthoDB" id="9802219at2"/>
<dbReference type="UniPathway" id="UPA00189">
    <property type="reaction ID" value="UER00296"/>
</dbReference>
<dbReference type="Proteomes" id="UP000001683">
    <property type="component" value="Chromosome"/>
</dbReference>
<dbReference type="GO" id="GO:0005829">
    <property type="term" value="C:cytosol"/>
    <property type="evidence" value="ECO:0007669"/>
    <property type="project" value="TreeGrafter"/>
</dbReference>
<dbReference type="GO" id="GO:0005524">
    <property type="term" value="F:ATP binding"/>
    <property type="evidence" value="ECO:0007669"/>
    <property type="project" value="UniProtKB-UniRule"/>
</dbReference>
<dbReference type="GO" id="GO:0003921">
    <property type="term" value="F:GMP synthase activity"/>
    <property type="evidence" value="ECO:0007669"/>
    <property type="project" value="InterPro"/>
</dbReference>
<dbReference type="CDD" id="cd01742">
    <property type="entry name" value="GATase1_GMP_Synthase"/>
    <property type="match status" value="1"/>
</dbReference>
<dbReference type="CDD" id="cd01997">
    <property type="entry name" value="GMP_synthase_C"/>
    <property type="match status" value="1"/>
</dbReference>
<dbReference type="FunFam" id="3.30.300.10:FF:000002">
    <property type="entry name" value="GMP synthase [glutamine-hydrolyzing]"/>
    <property type="match status" value="1"/>
</dbReference>
<dbReference type="FunFam" id="3.40.50.620:FF:000001">
    <property type="entry name" value="GMP synthase [glutamine-hydrolyzing]"/>
    <property type="match status" value="1"/>
</dbReference>
<dbReference type="FunFam" id="3.40.50.880:FF:000001">
    <property type="entry name" value="GMP synthase [glutamine-hydrolyzing]"/>
    <property type="match status" value="1"/>
</dbReference>
<dbReference type="Gene3D" id="3.30.300.10">
    <property type="match status" value="1"/>
</dbReference>
<dbReference type="Gene3D" id="3.40.50.880">
    <property type="match status" value="1"/>
</dbReference>
<dbReference type="Gene3D" id="3.40.50.620">
    <property type="entry name" value="HUPs"/>
    <property type="match status" value="1"/>
</dbReference>
<dbReference type="HAMAP" id="MF_00344">
    <property type="entry name" value="GMP_synthase"/>
    <property type="match status" value="1"/>
</dbReference>
<dbReference type="InterPro" id="IPR029062">
    <property type="entry name" value="Class_I_gatase-like"/>
</dbReference>
<dbReference type="InterPro" id="IPR017926">
    <property type="entry name" value="GATASE"/>
</dbReference>
<dbReference type="InterPro" id="IPR001674">
    <property type="entry name" value="GMP_synth_C"/>
</dbReference>
<dbReference type="InterPro" id="IPR004739">
    <property type="entry name" value="GMP_synth_GATase"/>
</dbReference>
<dbReference type="InterPro" id="IPR022955">
    <property type="entry name" value="GMP_synthase"/>
</dbReference>
<dbReference type="InterPro" id="IPR025777">
    <property type="entry name" value="GMPS_ATP_PPase_dom"/>
</dbReference>
<dbReference type="InterPro" id="IPR022310">
    <property type="entry name" value="NAD/GMP_synthase"/>
</dbReference>
<dbReference type="InterPro" id="IPR014729">
    <property type="entry name" value="Rossmann-like_a/b/a_fold"/>
</dbReference>
<dbReference type="NCBIfam" id="TIGR00884">
    <property type="entry name" value="guaA_Cterm"/>
    <property type="match status" value="1"/>
</dbReference>
<dbReference type="NCBIfam" id="TIGR00888">
    <property type="entry name" value="guaA_Nterm"/>
    <property type="match status" value="1"/>
</dbReference>
<dbReference type="NCBIfam" id="NF000848">
    <property type="entry name" value="PRK00074.1"/>
    <property type="match status" value="1"/>
</dbReference>
<dbReference type="PANTHER" id="PTHR11922:SF2">
    <property type="entry name" value="GMP SYNTHASE [GLUTAMINE-HYDROLYZING]"/>
    <property type="match status" value="1"/>
</dbReference>
<dbReference type="PANTHER" id="PTHR11922">
    <property type="entry name" value="GMP SYNTHASE-RELATED"/>
    <property type="match status" value="1"/>
</dbReference>
<dbReference type="Pfam" id="PF00117">
    <property type="entry name" value="GATase"/>
    <property type="match status" value="1"/>
</dbReference>
<dbReference type="Pfam" id="PF00958">
    <property type="entry name" value="GMP_synt_C"/>
    <property type="match status" value="1"/>
</dbReference>
<dbReference type="Pfam" id="PF02540">
    <property type="entry name" value="NAD_synthase"/>
    <property type="match status" value="1"/>
</dbReference>
<dbReference type="PRINTS" id="PR00097">
    <property type="entry name" value="ANTSNTHASEII"/>
</dbReference>
<dbReference type="PRINTS" id="PR00099">
    <property type="entry name" value="CPSGATASE"/>
</dbReference>
<dbReference type="PRINTS" id="PR00096">
    <property type="entry name" value="GATASE"/>
</dbReference>
<dbReference type="SUPFAM" id="SSF52402">
    <property type="entry name" value="Adenine nucleotide alpha hydrolases-like"/>
    <property type="match status" value="1"/>
</dbReference>
<dbReference type="SUPFAM" id="SSF52317">
    <property type="entry name" value="Class I glutamine amidotransferase-like"/>
    <property type="match status" value="1"/>
</dbReference>
<dbReference type="SUPFAM" id="SSF54810">
    <property type="entry name" value="GMP synthetase C-terminal dimerisation domain"/>
    <property type="match status" value="1"/>
</dbReference>
<dbReference type="PROSITE" id="PS51273">
    <property type="entry name" value="GATASE_TYPE_1"/>
    <property type="match status" value="1"/>
</dbReference>
<dbReference type="PROSITE" id="PS51553">
    <property type="entry name" value="GMPS_ATP_PPASE"/>
    <property type="match status" value="1"/>
</dbReference>